<accession>A3P7Z0</accession>
<reference key="1">
    <citation type="journal article" date="2010" name="Genome Biol. Evol.">
        <title>Continuing evolution of Burkholderia mallei through genome reduction and large-scale rearrangements.</title>
        <authorList>
            <person name="Losada L."/>
            <person name="Ronning C.M."/>
            <person name="DeShazer D."/>
            <person name="Woods D."/>
            <person name="Fedorova N."/>
            <person name="Kim H.S."/>
            <person name="Shabalina S.A."/>
            <person name="Pearson T.R."/>
            <person name="Brinkac L."/>
            <person name="Tan P."/>
            <person name="Nandi T."/>
            <person name="Crabtree J."/>
            <person name="Badger J."/>
            <person name="Beckstrom-Sternberg S."/>
            <person name="Saqib M."/>
            <person name="Schutzer S.E."/>
            <person name="Keim P."/>
            <person name="Nierman W.C."/>
        </authorList>
    </citation>
    <scope>NUCLEOTIDE SEQUENCE [LARGE SCALE GENOMIC DNA]</scope>
    <source>
        <strain>1106a</strain>
    </source>
</reference>
<sequence>MAVFTAVSDADLALWMRHYDLGDVVAFRGIPSGIENSNFFLTTTRGEYVLTIFENLTAGQLPFYVDLMSHLAKHGVPVPAPVARDDGTLFGELHGKPAAIVTKLEGAAQLAPGVEHCVEVGQMLARMHLAGRDYPRHQPNLRSLPWWRDTVPAIAPFVTGEQRALLEGELAHQAAFFASDDYAALPEGPCHCDLFRDNALFAHAEPDTGHSVRLGGFFDFYFAGCDKWLFDVAVTVNDWCVDLPTGALDAARADALLRAYQTVRPFTAGERRHWGDMLRAGAYRFWVSRLYDFHLPRAAQMLKPHDPGHFERILRERIAHAGALPETHACN</sequence>
<name>KHSE_BURP0</name>
<gene>
    <name evidence="1" type="primary">thrB</name>
    <name type="ordered locus">BURPS1106A_A2419</name>
</gene>
<proteinExistence type="inferred from homology"/>
<dbReference type="EC" id="2.7.1.39" evidence="1"/>
<dbReference type="EMBL" id="CP000573">
    <property type="protein sequence ID" value="ABN92955.1"/>
    <property type="molecule type" value="Genomic_DNA"/>
</dbReference>
<dbReference type="RefSeq" id="WP_004530313.1">
    <property type="nucleotide sequence ID" value="NC_009078.1"/>
</dbReference>
<dbReference type="SMR" id="A3P7Z0"/>
<dbReference type="KEGG" id="bpl:BURPS1106A_A2419"/>
<dbReference type="HOGENOM" id="CLU_053300_0_0_4"/>
<dbReference type="UniPathway" id="UPA00050">
    <property type="reaction ID" value="UER00064"/>
</dbReference>
<dbReference type="Proteomes" id="UP000006738">
    <property type="component" value="Chromosome II"/>
</dbReference>
<dbReference type="GO" id="GO:0005524">
    <property type="term" value="F:ATP binding"/>
    <property type="evidence" value="ECO:0007669"/>
    <property type="project" value="UniProtKB-KW"/>
</dbReference>
<dbReference type="GO" id="GO:0004413">
    <property type="term" value="F:homoserine kinase activity"/>
    <property type="evidence" value="ECO:0007669"/>
    <property type="project" value="UniProtKB-UniRule"/>
</dbReference>
<dbReference type="GO" id="GO:0009088">
    <property type="term" value="P:threonine biosynthetic process"/>
    <property type="evidence" value="ECO:0007669"/>
    <property type="project" value="UniProtKB-UniRule"/>
</dbReference>
<dbReference type="CDD" id="cd05153">
    <property type="entry name" value="HomoserineK_II"/>
    <property type="match status" value="1"/>
</dbReference>
<dbReference type="Gene3D" id="3.90.1200.10">
    <property type="match status" value="1"/>
</dbReference>
<dbReference type="Gene3D" id="3.30.200.20">
    <property type="entry name" value="Phosphorylase Kinase, domain 1"/>
    <property type="match status" value="1"/>
</dbReference>
<dbReference type="HAMAP" id="MF_00301">
    <property type="entry name" value="Homoser_kinase_2"/>
    <property type="match status" value="1"/>
</dbReference>
<dbReference type="InterPro" id="IPR002575">
    <property type="entry name" value="Aminoglycoside_PTrfase"/>
</dbReference>
<dbReference type="InterPro" id="IPR005280">
    <property type="entry name" value="Homoserine_kinase_II"/>
</dbReference>
<dbReference type="InterPro" id="IPR011009">
    <property type="entry name" value="Kinase-like_dom_sf"/>
</dbReference>
<dbReference type="InterPro" id="IPR050249">
    <property type="entry name" value="Pseudomonas-type_ThrB"/>
</dbReference>
<dbReference type="NCBIfam" id="NF003558">
    <property type="entry name" value="PRK05231.1"/>
    <property type="match status" value="1"/>
</dbReference>
<dbReference type="NCBIfam" id="TIGR00938">
    <property type="entry name" value="thrB_alt"/>
    <property type="match status" value="1"/>
</dbReference>
<dbReference type="PANTHER" id="PTHR21064:SF6">
    <property type="entry name" value="AMINOGLYCOSIDE PHOSPHOTRANSFERASE DOMAIN-CONTAINING PROTEIN"/>
    <property type="match status" value="1"/>
</dbReference>
<dbReference type="PANTHER" id="PTHR21064">
    <property type="entry name" value="AMINOGLYCOSIDE PHOSPHOTRANSFERASE DOMAIN-CONTAINING PROTEIN-RELATED"/>
    <property type="match status" value="1"/>
</dbReference>
<dbReference type="Pfam" id="PF01636">
    <property type="entry name" value="APH"/>
    <property type="match status" value="1"/>
</dbReference>
<dbReference type="SUPFAM" id="SSF56112">
    <property type="entry name" value="Protein kinase-like (PK-like)"/>
    <property type="match status" value="1"/>
</dbReference>
<organism>
    <name type="scientific">Burkholderia pseudomallei (strain 1106a)</name>
    <dbReference type="NCBI Taxonomy" id="357348"/>
    <lineage>
        <taxon>Bacteria</taxon>
        <taxon>Pseudomonadati</taxon>
        <taxon>Pseudomonadota</taxon>
        <taxon>Betaproteobacteria</taxon>
        <taxon>Burkholderiales</taxon>
        <taxon>Burkholderiaceae</taxon>
        <taxon>Burkholderia</taxon>
        <taxon>pseudomallei group</taxon>
    </lineage>
</organism>
<feature type="chain" id="PRO_0000300788" description="Homoserine kinase">
    <location>
        <begin position="1"/>
        <end position="331"/>
    </location>
</feature>
<protein>
    <recommendedName>
        <fullName evidence="1">Homoserine kinase</fullName>
        <shortName evidence="1">HK</shortName>
        <shortName evidence="1">HSK</shortName>
        <ecNumber evidence="1">2.7.1.39</ecNumber>
    </recommendedName>
</protein>
<comment type="catalytic activity">
    <reaction evidence="1">
        <text>L-homoserine + ATP = O-phospho-L-homoserine + ADP + H(+)</text>
        <dbReference type="Rhea" id="RHEA:13985"/>
        <dbReference type="ChEBI" id="CHEBI:15378"/>
        <dbReference type="ChEBI" id="CHEBI:30616"/>
        <dbReference type="ChEBI" id="CHEBI:57476"/>
        <dbReference type="ChEBI" id="CHEBI:57590"/>
        <dbReference type="ChEBI" id="CHEBI:456216"/>
        <dbReference type="EC" id="2.7.1.39"/>
    </reaction>
</comment>
<comment type="pathway">
    <text evidence="1">Amino-acid biosynthesis; L-threonine biosynthesis; L-threonine from L-aspartate: step 4/5.</text>
</comment>
<comment type="similarity">
    <text evidence="1">Belongs to the pseudomonas-type ThrB family.</text>
</comment>
<evidence type="ECO:0000255" key="1">
    <source>
        <dbReference type="HAMAP-Rule" id="MF_00301"/>
    </source>
</evidence>
<keyword id="KW-0028">Amino-acid biosynthesis</keyword>
<keyword id="KW-0067">ATP-binding</keyword>
<keyword id="KW-0418">Kinase</keyword>
<keyword id="KW-0547">Nucleotide-binding</keyword>
<keyword id="KW-0791">Threonine biosynthesis</keyword>
<keyword id="KW-0808">Transferase</keyword>